<geneLocation type="chloroplast"/>
<protein>
    <recommendedName>
        <fullName evidence="1">DNA-directed RNA polymerase subunit beta''</fullName>
        <ecNumber evidence="1">2.7.7.6</ecNumber>
    </recommendedName>
    <alternativeName>
        <fullName evidence="1">PEP</fullName>
    </alternativeName>
    <alternativeName>
        <fullName evidence="1">Plastid-encoded RNA polymerase subunit beta''</fullName>
        <shortName evidence="1">RNA polymerase subunit beta''</shortName>
    </alternativeName>
</protein>
<accession>Q09G56</accession>
<evidence type="ECO:0000255" key="1">
    <source>
        <dbReference type="HAMAP-Rule" id="MF_01324"/>
    </source>
</evidence>
<evidence type="ECO:0000256" key="2">
    <source>
        <dbReference type="SAM" id="MobiDB-lite"/>
    </source>
</evidence>
<reference key="1">
    <citation type="journal article" date="2006" name="BMC Plant Biol.">
        <title>Rapid and accurate pyrosequencing of angiosperm plastid genomes.</title>
        <authorList>
            <person name="Moore M.J."/>
            <person name="Dhingra A."/>
            <person name="Soltis P.S."/>
            <person name="Shaw R."/>
            <person name="Farmerie W.G."/>
            <person name="Folta K.M."/>
            <person name="Soltis D.E."/>
        </authorList>
    </citation>
    <scope>NUCLEOTIDE SEQUENCE [LARGE SCALE GENOMIC DNA]</scope>
</reference>
<keyword id="KW-0150">Chloroplast</keyword>
<keyword id="KW-0240">DNA-directed RNA polymerase</keyword>
<keyword id="KW-0479">Metal-binding</keyword>
<keyword id="KW-0548">Nucleotidyltransferase</keyword>
<keyword id="KW-0934">Plastid</keyword>
<keyword id="KW-0804">Transcription</keyword>
<keyword id="KW-0808">Transferase</keyword>
<keyword id="KW-0862">Zinc</keyword>
<name>RPOC2_PLAOC</name>
<organism>
    <name type="scientific">Platanus occidentalis</name>
    <name type="common">Sycamore</name>
    <name type="synonym">American plane tree</name>
    <dbReference type="NCBI Taxonomy" id="4403"/>
    <lineage>
        <taxon>Eukaryota</taxon>
        <taxon>Viridiplantae</taxon>
        <taxon>Streptophyta</taxon>
        <taxon>Embryophyta</taxon>
        <taxon>Tracheophyta</taxon>
        <taxon>Spermatophyta</taxon>
        <taxon>Magnoliopsida</taxon>
        <taxon>Proteales</taxon>
        <taxon>Platanaceae</taxon>
        <taxon>Platanus</taxon>
    </lineage>
</organism>
<comment type="function">
    <text evidence="1">DNA-dependent RNA polymerase catalyzes the transcription of DNA into RNA using the four ribonucleoside triphosphates as substrates.</text>
</comment>
<comment type="catalytic activity">
    <reaction evidence="1">
        <text>RNA(n) + a ribonucleoside 5'-triphosphate = RNA(n+1) + diphosphate</text>
        <dbReference type="Rhea" id="RHEA:21248"/>
        <dbReference type="Rhea" id="RHEA-COMP:14527"/>
        <dbReference type="Rhea" id="RHEA-COMP:17342"/>
        <dbReference type="ChEBI" id="CHEBI:33019"/>
        <dbReference type="ChEBI" id="CHEBI:61557"/>
        <dbReference type="ChEBI" id="CHEBI:140395"/>
        <dbReference type="EC" id="2.7.7.6"/>
    </reaction>
</comment>
<comment type="cofactor">
    <cofactor evidence="1">
        <name>Zn(2+)</name>
        <dbReference type="ChEBI" id="CHEBI:29105"/>
    </cofactor>
    <text evidence="1">Binds 1 Zn(2+) ion per subunit.</text>
</comment>
<comment type="subunit">
    <text evidence="1">In plastids the minimal PEP RNA polymerase catalytic core is composed of four subunits: alpha, beta, beta', and beta''. When a (nuclear-encoded) sigma factor is associated with the core the holoenzyme is formed, which can initiate transcription.</text>
</comment>
<comment type="subcellular location">
    <subcellularLocation>
        <location evidence="1">Plastid</location>
        <location evidence="1">Chloroplast</location>
    </subcellularLocation>
</comment>
<comment type="similarity">
    <text evidence="1">Belongs to the RNA polymerase beta' chain family. RpoC2 subfamily.</text>
</comment>
<proteinExistence type="inferred from homology"/>
<gene>
    <name evidence="1" type="primary">rpoC2</name>
</gene>
<feature type="chain" id="PRO_0000353581" description="DNA-directed RNA polymerase subunit beta''">
    <location>
        <begin position="1"/>
        <end position="1387"/>
    </location>
</feature>
<feature type="region of interest" description="Disordered" evidence="2">
    <location>
        <begin position="883"/>
        <end position="903"/>
    </location>
</feature>
<feature type="binding site" evidence="1">
    <location>
        <position position="224"/>
    </location>
    <ligand>
        <name>Zn(2+)</name>
        <dbReference type="ChEBI" id="CHEBI:29105"/>
    </ligand>
</feature>
<feature type="binding site" evidence="1">
    <location>
        <position position="295"/>
    </location>
    <ligand>
        <name>Zn(2+)</name>
        <dbReference type="ChEBI" id="CHEBI:29105"/>
    </ligand>
</feature>
<feature type="binding site" evidence="1">
    <location>
        <position position="302"/>
    </location>
    <ligand>
        <name>Zn(2+)</name>
        <dbReference type="ChEBI" id="CHEBI:29105"/>
    </ligand>
</feature>
<feature type="binding site" evidence="1">
    <location>
        <position position="305"/>
    </location>
    <ligand>
        <name>Zn(2+)</name>
        <dbReference type="ChEBI" id="CHEBI:29105"/>
    </ligand>
</feature>
<dbReference type="EC" id="2.7.7.6" evidence="1"/>
<dbReference type="EMBL" id="DQ923116">
    <property type="protein sequence ID" value="ABI49768.1"/>
    <property type="molecule type" value="Genomic_DNA"/>
</dbReference>
<dbReference type="RefSeq" id="YP_740555.1">
    <property type="nucleotide sequence ID" value="NC_008335.1"/>
</dbReference>
<dbReference type="SMR" id="Q09G56"/>
<dbReference type="GeneID" id="4271287"/>
<dbReference type="GO" id="GO:0009507">
    <property type="term" value="C:chloroplast"/>
    <property type="evidence" value="ECO:0007669"/>
    <property type="project" value="UniProtKB-SubCell"/>
</dbReference>
<dbReference type="GO" id="GO:0000428">
    <property type="term" value="C:DNA-directed RNA polymerase complex"/>
    <property type="evidence" value="ECO:0007669"/>
    <property type="project" value="UniProtKB-KW"/>
</dbReference>
<dbReference type="GO" id="GO:0005739">
    <property type="term" value="C:mitochondrion"/>
    <property type="evidence" value="ECO:0007669"/>
    <property type="project" value="GOC"/>
</dbReference>
<dbReference type="GO" id="GO:0003677">
    <property type="term" value="F:DNA binding"/>
    <property type="evidence" value="ECO:0007669"/>
    <property type="project" value="UniProtKB-UniRule"/>
</dbReference>
<dbReference type="GO" id="GO:0003899">
    <property type="term" value="F:DNA-directed RNA polymerase activity"/>
    <property type="evidence" value="ECO:0007669"/>
    <property type="project" value="UniProtKB-UniRule"/>
</dbReference>
<dbReference type="GO" id="GO:0008270">
    <property type="term" value="F:zinc ion binding"/>
    <property type="evidence" value="ECO:0007669"/>
    <property type="project" value="UniProtKB-UniRule"/>
</dbReference>
<dbReference type="GO" id="GO:0006351">
    <property type="term" value="P:DNA-templated transcription"/>
    <property type="evidence" value="ECO:0007669"/>
    <property type="project" value="UniProtKB-UniRule"/>
</dbReference>
<dbReference type="CDD" id="cd02655">
    <property type="entry name" value="RNAP_beta'_C"/>
    <property type="match status" value="1"/>
</dbReference>
<dbReference type="FunFam" id="1.10.132.30:FF:000002">
    <property type="entry name" value="DNA-directed RNA polymerase subunit beta"/>
    <property type="match status" value="1"/>
</dbReference>
<dbReference type="Gene3D" id="1.10.132.30">
    <property type="match status" value="1"/>
</dbReference>
<dbReference type="Gene3D" id="1.10.150.390">
    <property type="match status" value="1"/>
</dbReference>
<dbReference type="Gene3D" id="1.10.1790.20">
    <property type="match status" value="1"/>
</dbReference>
<dbReference type="Gene3D" id="1.10.274.100">
    <property type="entry name" value="RNA polymerase Rpb1, domain 3"/>
    <property type="match status" value="1"/>
</dbReference>
<dbReference type="HAMAP" id="MF_01324">
    <property type="entry name" value="RNApol_bact_RpoC2"/>
    <property type="match status" value="1"/>
</dbReference>
<dbReference type="InterPro" id="IPR012756">
    <property type="entry name" value="DNA-dir_RpoC2_beta_pp"/>
</dbReference>
<dbReference type="InterPro" id="IPR050254">
    <property type="entry name" value="RNA_pol_beta''_euk"/>
</dbReference>
<dbReference type="InterPro" id="IPR042102">
    <property type="entry name" value="RNA_pol_Rpb1_3_sf"/>
</dbReference>
<dbReference type="InterPro" id="IPR007083">
    <property type="entry name" value="RNA_pol_Rpb1_4"/>
</dbReference>
<dbReference type="InterPro" id="IPR007081">
    <property type="entry name" value="RNA_pol_Rpb1_5"/>
</dbReference>
<dbReference type="InterPro" id="IPR038120">
    <property type="entry name" value="Rpb1_funnel_sf"/>
</dbReference>
<dbReference type="NCBIfam" id="TIGR02388">
    <property type="entry name" value="rpoC2_cyan"/>
    <property type="match status" value="1"/>
</dbReference>
<dbReference type="PANTHER" id="PTHR34995">
    <property type="entry name" value="DNA-DIRECTED RNA POLYMERASE SUBUNIT BETA"/>
    <property type="match status" value="1"/>
</dbReference>
<dbReference type="PANTHER" id="PTHR34995:SF1">
    <property type="entry name" value="DNA-DIRECTED RNA POLYMERASE SUBUNIT BETA"/>
    <property type="match status" value="1"/>
</dbReference>
<dbReference type="Pfam" id="PF05000">
    <property type="entry name" value="RNA_pol_Rpb1_4"/>
    <property type="match status" value="1"/>
</dbReference>
<dbReference type="Pfam" id="PF04998">
    <property type="entry name" value="RNA_pol_Rpb1_5"/>
    <property type="match status" value="2"/>
</dbReference>
<dbReference type="SUPFAM" id="SSF64484">
    <property type="entry name" value="beta and beta-prime subunits of DNA dependent RNA-polymerase"/>
    <property type="match status" value="1"/>
</dbReference>
<sequence>MEVLMAERADLVFHNKAIDGTAMKRLISRLIDHFGMAYTSHILDQVKTLGFQQATATSISLGIDDLLTIPSKGWLVQDAEQQSLILEKHHHYGNVHAVEKLRQSIEIWYATSEYLRQEMNPNFRMTNPSNPVHIMSFSGARGNASQVHQLVGMRGLMSDPQGQMIDLPIQSNLREGLSLTEYIISCYGARKGVVDTAVRTSDAGYLTRRLVEVVQHIVVRRTDCGTLQGISVSPRNGMITERILIQTLIGRVLADDIYMGPRCIAARNQDIGIGLVNRFITFGAQPISIRTPFTCRSISWICRLCYGRSPTHGDLVELGEAVGIIAGQSIGEPGTQLTLRTFHTGGVFTGGTAEHVRAPSNGKIKFNEDLVHPTRTRHGHPAFLCYIDLYVTIESQDIIHNVNIPPKSFLLVQNDQYVESEQVIAEIRAGTSTLNFKERVRKHIYSDSEGEMHWSTNVYHAPEYTYSHVHLLPKTSHLWILSGGSYRSSIVPLSLHKDQDQMNVHSLSVERRYISNFSVTNDQVRHKLFNSYPSSKKGERILDYSGTDRIICNGHCNFIYPSILHENSDLLAKRRRNRFIIPFQSNQEREKELMSRSDISIEIPINGIFRRNSILAYFDDPRYRRNNSGITKYGTIEVHAIVKKEDLIEYRRAKEFRPKYQMKVDRFFFIPEEVHILPGSSSIMVRNNSIIGVDTRITLNARSRVGGLVRVERKKKRIELKIFSGDIHFPGETDKISRHSGILIPPGTGKKNSKKSKKKLQNWIYVQRITPIKKKYFVFVRPVVTYEIADGINLATLFPQDLLQERDNVQLRVVNYILYANGKPIRGISHTTIQLVRTCLVLNWDQGKNGSSIKEVHASFVEVRANDLIQDFIRMDLVKSTISHTGKRNDPAGSGLIPDNGSDRTNINPFYSKARIQQSLSRHQGTLRSLLNRNKECQSLIILSSSNCSQMGPLNTLKYHNVTKESIKRDPPIPIRNSLGPLGTVPKITNFYSSYYQLITHNQILVSKYLLLANLKQTLQVFKYYLMDENGKIYNPDPCSNIIFNPFNLNWYFLHHDYCEETSTIISLGQFFCENVCISKKGPHLKSGQVLIVHVDSLVIRSAKPYLATPGATVHGHYGEILYKGDTLVTFIYEKSRSGDITQGLPKVEQVLEVRSIDSISMTLENRVEGWNERITRILGIPWEYLIGAELTIAQSRISLVNKIQKVYRSQGVQIHNRHIEIIVRQITSKVLVSEDGMSNVFSPGELIGLFRAERTGRALEEAICYRAVLLGITRASLNTQSFISEASFQETARVLAKAALRGRIDWLKGLKENVVLGGMIPVGTGFKGLVHRSREHNNIPLEIKKKNLFEGEMRDTLFHHRELFDSCIPKNFHDTSKQSFTGFNDF</sequence>